<name>CHS3_GERHY</name>
<gene>
    <name type="primary">CHS3</name>
</gene>
<keyword id="KW-0012">Acyltransferase</keyword>
<keyword id="KW-0284">Flavonoid biosynthesis</keyword>
<keyword id="KW-0808">Transferase</keyword>
<dbReference type="EC" id="2.3.1.74"/>
<dbReference type="EMBL" id="Z38098">
    <property type="protein sequence ID" value="CAA86220.1"/>
    <property type="molecule type" value="mRNA"/>
</dbReference>
<dbReference type="PIR" id="S56701">
    <property type="entry name" value="S55464"/>
</dbReference>
<dbReference type="SMR" id="P48392"/>
<dbReference type="UniPathway" id="UPA00154"/>
<dbReference type="GO" id="GO:0016210">
    <property type="term" value="F:naringenin-chalcone synthase activity"/>
    <property type="evidence" value="ECO:0007669"/>
    <property type="project" value="UniProtKB-EC"/>
</dbReference>
<dbReference type="GO" id="GO:0009813">
    <property type="term" value="P:flavonoid biosynthetic process"/>
    <property type="evidence" value="ECO:0007669"/>
    <property type="project" value="UniProtKB-UniPathway"/>
</dbReference>
<dbReference type="GO" id="GO:0030639">
    <property type="term" value="P:polyketide biosynthetic process"/>
    <property type="evidence" value="ECO:0007669"/>
    <property type="project" value="TreeGrafter"/>
</dbReference>
<dbReference type="CDD" id="cd00831">
    <property type="entry name" value="CHS_like"/>
    <property type="match status" value="1"/>
</dbReference>
<dbReference type="FunFam" id="3.40.47.10:FF:000014">
    <property type="entry name" value="Chalcone synthase 1"/>
    <property type="match status" value="1"/>
</dbReference>
<dbReference type="FunFam" id="3.40.47.10:FF:000025">
    <property type="entry name" value="Chalcone synthase 2"/>
    <property type="match status" value="1"/>
</dbReference>
<dbReference type="Gene3D" id="3.40.47.10">
    <property type="match status" value="2"/>
</dbReference>
<dbReference type="InterPro" id="IPR012328">
    <property type="entry name" value="Chalcone/stilbene_synt_C"/>
</dbReference>
<dbReference type="InterPro" id="IPR001099">
    <property type="entry name" value="Chalcone/stilbene_synt_N"/>
</dbReference>
<dbReference type="InterPro" id="IPR018088">
    <property type="entry name" value="Chalcone/stilbene_synthase_AS"/>
</dbReference>
<dbReference type="InterPro" id="IPR011141">
    <property type="entry name" value="Polyketide_synthase_type-III"/>
</dbReference>
<dbReference type="InterPro" id="IPR016039">
    <property type="entry name" value="Thiolase-like"/>
</dbReference>
<dbReference type="PANTHER" id="PTHR11877:SF14">
    <property type="entry name" value="CHALCONE SYNTHASE"/>
    <property type="match status" value="1"/>
</dbReference>
<dbReference type="PANTHER" id="PTHR11877">
    <property type="entry name" value="HYDROXYMETHYLGLUTARYL-COA SYNTHASE"/>
    <property type="match status" value="1"/>
</dbReference>
<dbReference type="Pfam" id="PF02797">
    <property type="entry name" value="Chal_sti_synt_C"/>
    <property type="match status" value="1"/>
</dbReference>
<dbReference type="Pfam" id="PF00195">
    <property type="entry name" value="Chal_sti_synt_N"/>
    <property type="match status" value="1"/>
</dbReference>
<dbReference type="PIRSF" id="PIRSF000451">
    <property type="entry name" value="PKS_III"/>
    <property type="match status" value="1"/>
</dbReference>
<dbReference type="SUPFAM" id="SSF53901">
    <property type="entry name" value="Thiolase-like"/>
    <property type="match status" value="2"/>
</dbReference>
<dbReference type="PROSITE" id="PS00441">
    <property type="entry name" value="CHALCONE_SYNTH"/>
    <property type="match status" value="1"/>
</dbReference>
<reference key="1">
    <citation type="journal article" date="1995" name="Plant Mol. Biol.">
        <title>Chalcone synthase-like genes active during corolla development are differentially expressed and encode enzymes with different catalytic properties in Gerbera hybrida (Asteraceae).</title>
        <authorList>
            <person name="Helariutta Y."/>
            <person name="Elomaa P."/>
            <person name="Kotilainen M."/>
            <person name="Griesbach R.J."/>
            <person name="Schroeder J."/>
            <person name="Teeri T.H."/>
        </authorList>
    </citation>
    <scope>NUCLEOTIDE SEQUENCE [MRNA]</scope>
    <source>
        <tissue>Corolla</tissue>
    </source>
</reference>
<organism>
    <name type="scientific">Gerbera hybrida</name>
    <name type="common">Daisy</name>
    <dbReference type="NCBI Taxonomy" id="18101"/>
    <lineage>
        <taxon>Eukaryota</taxon>
        <taxon>Viridiplantae</taxon>
        <taxon>Streptophyta</taxon>
        <taxon>Embryophyta</taxon>
        <taxon>Tracheophyta</taxon>
        <taxon>Spermatophyta</taxon>
        <taxon>Magnoliopsida</taxon>
        <taxon>eudicotyledons</taxon>
        <taxon>Gunneridae</taxon>
        <taxon>Pentapetalae</taxon>
        <taxon>asterids</taxon>
        <taxon>campanulids</taxon>
        <taxon>Asterales</taxon>
        <taxon>Asteraceae</taxon>
        <taxon>Mutisioideae</taxon>
        <taxon>Mutisieae</taxon>
        <taxon>Gerbera</taxon>
    </lineage>
</organism>
<evidence type="ECO:0000255" key="1">
    <source>
        <dbReference type="PROSITE-ProRule" id="PRU10023"/>
    </source>
</evidence>
<evidence type="ECO:0000305" key="2"/>
<feature type="chain" id="PRO_0000215978" description="Chalcone synthase 3">
    <location>
        <begin position="1"/>
        <end position="403"/>
    </location>
</feature>
<feature type="active site" evidence="1">
    <location>
        <position position="170"/>
    </location>
</feature>
<accession>P48392</accession>
<sequence>MATSPAVIDVETIRKAQRAEGPATILAIGTATPANCVYQADYPDYYFRVTESEHMVDLKEKFQRMCDKSMIRKRYMHITEEFLKENPSMCKFMAPSLDARQDLVVVEVPKLGKEAATKAIKEWGFPKSKITHLVFCTTSGVDMPGADYQLTKLLGLRPSVKRLMMYQQGCFAGGTVLRLAKDLAENNKGARVLVVCSEITAVTFRGPNEGHLDSLVGQALFGDGAAAVIIGSDPDLSVERPLFEMVSAAQTILPDSEGAIDGHLKEVGLTFHLLKDVPALIAKNIEKALIQAFSPLNINDWNSIFWIAHPGGPAILDQVEFKLGLREEKLRASRHVLSEYGNMSSACVLFILDEMRKKSIKDGKTTTGEGLEWGVLFGFGPGLTVETVVLHSLPATISVATQN</sequence>
<comment type="function">
    <text>The primary product of this enzyme is 4,2',4',6'-tetrahydroxychalcone (also termed naringenin-chalcone or chalcone) which can under specific conditions spontaneously isomerize into naringenin.</text>
</comment>
<comment type="catalytic activity">
    <reaction evidence="1">
        <text>(E)-4-coumaroyl-CoA + 3 malonyl-CoA + 3 H(+) = 2',4,4',6'-tetrahydroxychalcone + 3 CO2 + 4 CoA</text>
        <dbReference type="Rhea" id="RHEA:11128"/>
        <dbReference type="ChEBI" id="CHEBI:15378"/>
        <dbReference type="ChEBI" id="CHEBI:15413"/>
        <dbReference type="ChEBI" id="CHEBI:16526"/>
        <dbReference type="ChEBI" id="CHEBI:57287"/>
        <dbReference type="ChEBI" id="CHEBI:57384"/>
        <dbReference type="ChEBI" id="CHEBI:85008"/>
        <dbReference type="EC" id="2.3.1.74"/>
    </reaction>
</comment>
<comment type="pathway">
    <text>Secondary metabolite biosynthesis; flavonoid biosynthesis.</text>
</comment>
<comment type="similarity">
    <text evidence="2">Belongs to the thiolase-like superfamily. Chalcone/stilbene synthases family.</text>
</comment>
<protein>
    <recommendedName>
        <fullName>Chalcone synthase 3</fullName>
        <ecNumber>2.3.1.74</ecNumber>
    </recommendedName>
    <alternativeName>
        <fullName>Naringenin-chalcone synthase 3</fullName>
    </alternativeName>
</protein>
<proteinExistence type="evidence at transcript level"/>